<gene>
    <name evidence="1" type="primary">gpsA</name>
    <name type="ordered locus">CTA_0776</name>
</gene>
<reference key="1">
    <citation type="journal article" date="2005" name="Infect. Immun.">
        <title>Comparative genomic analysis of Chlamydia trachomatis oculotropic and genitotropic strains.</title>
        <authorList>
            <person name="Carlson J.H."/>
            <person name="Porcella S.F."/>
            <person name="McClarty G."/>
            <person name="Caldwell H.D."/>
        </authorList>
    </citation>
    <scope>NUCLEOTIDE SEQUENCE [LARGE SCALE GENOMIC DNA]</scope>
    <source>
        <strain>ATCC VR-571B / DSM 19440 / HAR-13</strain>
    </source>
</reference>
<name>GPDA_CHLTA</name>
<evidence type="ECO:0000255" key="1">
    <source>
        <dbReference type="HAMAP-Rule" id="MF_00394"/>
    </source>
</evidence>
<protein>
    <recommendedName>
        <fullName evidence="1">Glycerol-3-phosphate dehydrogenase [NAD(P)+]</fullName>
        <ecNumber evidence="1">1.1.1.94</ecNumber>
    </recommendedName>
    <alternativeName>
        <fullName evidence="1">NAD(P)(+)-dependent glycerol-3-phosphate dehydrogenase</fullName>
    </alternativeName>
    <alternativeName>
        <fullName evidence="1">NAD(P)H-dependent dihydroxyacetone-phosphate reductase</fullName>
    </alternativeName>
</protein>
<comment type="function">
    <text evidence="1">Catalyzes the reduction of the glycolytic intermediate dihydroxyacetone phosphate (DHAP) to sn-glycerol 3-phosphate (G3P), the key precursor for phospholipid synthesis.</text>
</comment>
<comment type="catalytic activity">
    <reaction evidence="1">
        <text>sn-glycerol 3-phosphate + NAD(+) = dihydroxyacetone phosphate + NADH + H(+)</text>
        <dbReference type="Rhea" id="RHEA:11092"/>
        <dbReference type="ChEBI" id="CHEBI:15378"/>
        <dbReference type="ChEBI" id="CHEBI:57540"/>
        <dbReference type="ChEBI" id="CHEBI:57597"/>
        <dbReference type="ChEBI" id="CHEBI:57642"/>
        <dbReference type="ChEBI" id="CHEBI:57945"/>
        <dbReference type="EC" id="1.1.1.94"/>
    </reaction>
    <physiologicalReaction direction="right-to-left" evidence="1">
        <dbReference type="Rhea" id="RHEA:11094"/>
    </physiologicalReaction>
</comment>
<comment type="catalytic activity">
    <reaction evidence="1">
        <text>sn-glycerol 3-phosphate + NADP(+) = dihydroxyacetone phosphate + NADPH + H(+)</text>
        <dbReference type="Rhea" id="RHEA:11096"/>
        <dbReference type="ChEBI" id="CHEBI:15378"/>
        <dbReference type="ChEBI" id="CHEBI:57597"/>
        <dbReference type="ChEBI" id="CHEBI:57642"/>
        <dbReference type="ChEBI" id="CHEBI:57783"/>
        <dbReference type="ChEBI" id="CHEBI:58349"/>
        <dbReference type="EC" id="1.1.1.94"/>
    </reaction>
    <physiologicalReaction direction="right-to-left" evidence="1">
        <dbReference type="Rhea" id="RHEA:11098"/>
    </physiologicalReaction>
</comment>
<comment type="pathway">
    <text evidence="1">Membrane lipid metabolism; glycerophospholipid metabolism.</text>
</comment>
<comment type="subcellular location">
    <subcellularLocation>
        <location evidence="1">Cytoplasm</location>
    </subcellularLocation>
</comment>
<comment type="similarity">
    <text evidence="1">Belongs to the NAD-dependent glycerol-3-phosphate dehydrogenase family.</text>
</comment>
<dbReference type="EC" id="1.1.1.94" evidence="1"/>
<dbReference type="EMBL" id="CP000051">
    <property type="protein sequence ID" value="AAX50992.1"/>
    <property type="molecule type" value="Genomic_DNA"/>
</dbReference>
<dbReference type="RefSeq" id="WP_010725315.1">
    <property type="nucleotide sequence ID" value="NC_007429.1"/>
</dbReference>
<dbReference type="SMR" id="Q3KKY0"/>
<dbReference type="KEGG" id="cta:CTA_0776"/>
<dbReference type="HOGENOM" id="CLU_033449_0_2_0"/>
<dbReference type="UniPathway" id="UPA00940"/>
<dbReference type="Proteomes" id="UP000002532">
    <property type="component" value="Chromosome"/>
</dbReference>
<dbReference type="GO" id="GO:0005829">
    <property type="term" value="C:cytosol"/>
    <property type="evidence" value="ECO:0007669"/>
    <property type="project" value="TreeGrafter"/>
</dbReference>
<dbReference type="GO" id="GO:0047952">
    <property type="term" value="F:glycerol-3-phosphate dehydrogenase [NAD(P)+] activity"/>
    <property type="evidence" value="ECO:0007669"/>
    <property type="project" value="UniProtKB-UniRule"/>
</dbReference>
<dbReference type="GO" id="GO:0051287">
    <property type="term" value="F:NAD binding"/>
    <property type="evidence" value="ECO:0007669"/>
    <property type="project" value="InterPro"/>
</dbReference>
<dbReference type="GO" id="GO:0005975">
    <property type="term" value="P:carbohydrate metabolic process"/>
    <property type="evidence" value="ECO:0007669"/>
    <property type="project" value="InterPro"/>
</dbReference>
<dbReference type="GO" id="GO:0046167">
    <property type="term" value="P:glycerol-3-phosphate biosynthetic process"/>
    <property type="evidence" value="ECO:0007669"/>
    <property type="project" value="UniProtKB-UniRule"/>
</dbReference>
<dbReference type="GO" id="GO:0046168">
    <property type="term" value="P:glycerol-3-phosphate catabolic process"/>
    <property type="evidence" value="ECO:0007669"/>
    <property type="project" value="InterPro"/>
</dbReference>
<dbReference type="GO" id="GO:0006650">
    <property type="term" value="P:glycerophospholipid metabolic process"/>
    <property type="evidence" value="ECO:0007669"/>
    <property type="project" value="UniProtKB-UniRule"/>
</dbReference>
<dbReference type="GO" id="GO:0008654">
    <property type="term" value="P:phospholipid biosynthetic process"/>
    <property type="evidence" value="ECO:0007669"/>
    <property type="project" value="UniProtKB-KW"/>
</dbReference>
<dbReference type="FunFam" id="1.10.1040.10:FF:000001">
    <property type="entry name" value="Glycerol-3-phosphate dehydrogenase [NAD(P)+]"/>
    <property type="match status" value="1"/>
</dbReference>
<dbReference type="Gene3D" id="1.10.1040.10">
    <property type="entry name" value="N-(1-d-carboxylethyl)-l-norvaline Dehydrogenase, domain 2"/>
    <property type="match status" value="1"/>
</dbReference>
<dbReference type="Gene3D" id="3.40.50.720">
    <property type="entry name" value="NAD(P)-binding Rossmann-like Domain"/>
    <property type="match status" value="1"/>
</dbReference>
<dbReference type="HAMAP" id="MF_00394">
    <property type="entry name" value="NAD_Glyc3P_dehydrog"/>
    <property type="match status" value="1"/>
</dbReference>
<dbReference type="InterPro" id="IPR008927">
    <property type="entry name" value="6-PGluconate_DH-like_C_sf"/>
</dbReference>
<dbReference type="InterPro" id="IPR013328">
    <property type="entry name" value="6PGD_dom2"/>
</dbReference>
<dbReference type="InterPro" id="IPR006168">
    <property type="entry name" value="G3P_DH_NAD-dep"/>
</dbReference>
<dbReference type="InterPro" id="IPR006109">
    <property type="entry name" value="G3P_DH_NAD-dep_C"/>
</dbReference>
<dbReference type="InterPro" id="IPR011128">
    <property type="entry name" value="G3P_DH_NAD-dep_N"/>
</dbReference>
<dbReference type="InterPro" id="IPR036291">
    <property type="entry name" value="NAD(P)-bd_dom_sf"/>
</dbReference>
<dbReference type="NCBIfam" id="NF000940">
    <property type="entry name" value="PRK00094.1-2"/>
    <property type="match status" value="1"/>
</dbReference>
<dbReference type="NCBIfam" id="NF000942">
    <property type="entry name" value="PRK00094.1-4"/>
    <property type="match status" value="1"/>
</dbReference>
<dbReference type="PANTHER" id="PTHR11728">
    <property type="entry name" value="GLYCEROL-3-PHOSPHATE DEHYDROGENASE"/>
    <property type="match status" value="1"/>
</dbReference>
<dbReference type="PANTHER" id="PTHR11728:SF1">
    <property type="entry name" value="GLYCEROL-3-PHOSPHATE DEHYDROGENASE [NAD(+)] 2, CHLOROPLASTIC"/>
    <property type="match status" value="1"/>
</dbReference>
<dbReference type="Pfam" id="PF07479">
    <property type="entry name" value="NAD_Gly3P_dh_C"/>
    <property type="match status" value="1"/>
</dbReference>
<dbReference type="Pfam" id="PF01210">
    <property type="entry name" value="NAD_Gly3P_dh_N"/>
    <property type="match status" value="1"/>
</dbReference>
<dbReference type="PIRSF" id="PIRSF000114">
    <property type="entry name" value="Glycerol-3-P_dh"/>
    <property type="match status" value="1"/>
</dbReference>
<dbReference type="PRINTS" id="PR00077">
    <property type="entry name" value="GPDHDRGNASE"/>
</dbReference>
<dbReference type="SUPFAM" id="SSF48179">
    <property type="entry name" value="6-phosphogluconate dehydrogenase C-terminal domain-like"/>
    <property type="match status" value="1"/>
</dbReference>
<dbReference type="SUPFAM" id="SSF51735">
    <property type="entry name" value="NAD(P)-binding Rossmann-fold domains"/>
    <property type="match status" value="1"/>
</dbReference>
<dbReference type="PROSITE" id="PS00957">
    <property type="entry name" value="NAD_G3PDH"/>
    <property type="match status" value="1"/>
</dbReference>
<sequence>MKETIAYLGMGMWGFSLANLLANNGHRVVGWARNPALIEQLSVQRRHPAAPHISIPQNLSFTSHMEEALDGATMIVEGVTSAGMRPVLTQLKALTELRVPLVITSKGIEQNTGLLLSEIALEIFGRPAAQHLGYLSGPSIASEVLRGCPCSVVISAYNPDTLKQIHRAFLTPTFRVYPNSDLKGVALGGALKNVIAIACGISDGFRFGDNAKSGLVTRGLHEIRKFATIMGCRPDTLNGLAGLGDLCTTSFSAFSRNTLFGKLLAEGLTPEQAKTKIGMVVEGVYTALSAHQIATHHRIDMPITTSVYRVLYENLDIQEGIAQLLQRDTKEEYL</sequence>
<accession>Q3KKY0</accession>
<keyword id="KW-0963">Cytoplasm</keyword>
<keyword id="KW-0444">Lipid biosynthesis</keyword>
<keyword id="KW-0443">Lipid metabolism</keyword>
<keyword id="KW-0520">NAD</keyword>
<keyword id="KW-0521">NADP</keyword>
<keyword id="KW-0547">Nucleotide-binding</keyword>
<keyword id="KW-0560">Oxidoreductase</keyword>
<keyword id="KW-0594">Phospholipid biosynthesis</keyword>
<keyword id="KW-1208">Phospholipid metabolism</keyword>
<organism>
    <name type="scientific">Chlamydia trachomatis serovar A (strain ATCC VR-571B / DSM 19440 / HAR-13)</name>
    <dbReference type="NCBI Taxonomy" id="315277"/>
    <lineage>
        <taxon>Bacteria</taxon>
        <taxon>Pseudomonadati</taxon>
        <taxon>Chlamydiota</taxon>
        <taxon>Chlamydiia</taxon>
        <taxon>Chlamydiales</taxon>
        <taxon>Chlamydiaceae</taxon>
        <taxon>Chlamydia/Chlamydophila group</taxon>
        <taxon>Chlamydia</taxon>
    </lineage>
</organism>
<feature type="chain" id="PRO_0000255295" description="Glycerol-3-phosphate dehydrogenase [NAD(P)+]">
    <location>
        <begin position="1"/>
        <end position="334"/>
    </location>
</feature>
<feature type="active site" description="Proton acceptor" evidence="1">
    <location>
        <position position="192"/>
    </location>
</feature>
<feature type="binding site" evidence="1">
    <location>
        <position position="13"/>
    </location>
    <ligand>
        <name>NADPH</name>
        <dbReference type="ChEBI" id="CHEBI:57783"/>
    </ligand>
</feature>
<feature type="binding site" evidence="1">
    <location>
        <position position="33"/>
    </location>
    <ligand>
        <name>NADPH</name>
        <dbReference type="ChEBI" id="CHEBI:57783"/>
    </ligand>
</feature>
<feature type="binding site" evidence="1">
    <location>
        <position position="106"/>
    </location>
    <ligand>
        <name>NADPH</name>
        <dbReference type="ChEBI" id="CHEBI:57783"/>
    </ligand>
</feature>
<feature type="binding site" evidence="1">
    <location>
        <position position="106"/>
    </location>
    <ligand>
        <name>sn-glycerol 3-phosphate</name>
        <dbReference type="ChEBI" id="CHEBI:57597"/>
    </ligand>
</feature>
<feature type="binding site" evidence="1">
    <location>
        <position position="137"/>
    </location>
    <ligand>
        <name>sn-glycerol 3-phosphate</name>
        <dbReference type="ChEBI" id="CHEBI:57597"/>
    </ligand>
</feature>
<feature type="binding site" evidence="1">
    <location>
        <position position="139"/>
    </location>
    <ligand>
        <name>sn-glycerol 3-phosphate</name>
        <dbReference type="ChEBI" id="CHEBI:57597"/>
    </ligand>
</feature>
<feature type="binding site" evidence="1">
    <location>
        <position position="141"/>
    </location>
    <ligand>
        <name>NADPH</name>
        <dbReference type="ChEBI" id="CHEBI:57783"/>
    </ligand>
</feature>
<feature type="binding site" evidence="1">
    <location>
        <position position="192"/>
    </location>
    <ligand>
        <name>sn-glycerol 3-phosphate</name>
        <dbReference type="ChEBI" id="CHEBI:57597"/>
    </ligand>
</feature>
<feature type="binding site" evidence="1">
    <location>
        <position position="245"/>
    </location>
    <ligand>
        <name>sn-glycerol 3-phosphate</name>
        <dbReference type="ChEBI" id="CHEBI:57597"/>
    </ligand>
</feature>
<feature type="binding site" evidence="1">
    <location>
        <position position="255"/>
    </location>
    <ligand>
        <name>sn-glycerol 3-phosphate</name>
        <dbReference type="ChEBI" id="CHEBI:57597"/>
    </ligand>
</feature>
<feature type="binding site" evidence="1">
    <location>
        <position position="256"/>
    </location>
    <ligand>
        <name>NADPH</name>
        <dbReference type="ChEBI" id="CHEBI:57783"/>
    </ligand>
</feature>
<feature type="binding site" evidence="1">
    <location>
        <position position="256"/>
    </location>
    <ligand>
        <name>sn-glycerol 3-phosphate</name>
        <dbReference type="ChEBI" id="CHEBI:57597"/>
    </ligand>
</feature>
<feature type="binding site" evidence="1">
    <location>
        <position position="257"/>
    </location>
    <ligand>
        <name>sn-glycerol 3-phosphate</name>
        <dbReference type="ChEBI" id="CHEBI:57597"/>
    </ligand>
</feature>
<feature type="binding site" evidence="1">
    <location>
        <position position="280"/>
    </location>
    <ligand>
        <name>NADPH</name>
        <dbReference type="ChEBI" id="CHEBI:57783"/>
    </ligand>
</feature>
<feature type="binding site" evidence="1">
    <location>
        <position position="282"/>
    </location>
    <ligand>
        <name>NADPH</name>
        <dbReference type="ChEBI" id="CHEBI:57783"/>
    </ligand>
</feature>
<proteinExistence type="inferred from homology"/>